<name>TBB4_MAIZE</name>
<comment type="function">
    <text>Tubulin is the major constituent of microtubules, a cylinder consisting of laterally associated linear protofilaments composed of alpha- and beta-tubulin heterodimers. Microtubules grow by the addition of GTP-tubulin dimers to the microtubule end, where a stabilizing cap forms. Below the cap, tubulin dimers are in GDP-bound state, owing to GTPase activity of alpha-tubulin.</text>
</comment>
<comment type="cofactor">
    <cofactor evidence="1">
        <name>Mg(2+)</name>
        <dbReference type="ChEBI" id="CHEBI:18420"/>
    </cofactor>
</comment>
<comment type="subunit">
    <text>Dimer of alpha and beta chains. A typical microtubule is a hollow water-filled tube with an outer diameter of 25 nm and an inner diameter of 15 nM. Alpha-beta heterodimers associate head-to-tail to form protofilaments running lengthwise along the microtubule wall with the beta-tubulin subunit facing the microtubule plus end conferring a structural polarity. Microtubules usually have 13 protofilaments but different protofilament numbers can be found in some organisms and specialized cells.</text>
</comment>
<comment type="subcellular location">
    <subcellularLocation>
        <location>Cytoplasm</location>
        <location>Cytoskeleton</location>
    </subcellularLocation>
</comment>
<comment type="similarity">
    <text evidence="4">Belongs to the tubulin family.</text>
</comment>
<feature type="chain" id="PRO_0000048358" description="Tubulin beta-4 chain">
    <location>
        <begin position="1"/>
        <end position="447"/>
    </location>
</feature>
<feature type="region of interest" description="Disordered" evidence="3">
    <location>
        <begin position="428"/>
        <end position="447"/>
    </location>
</feature>
<feature type="compositionally biased region" description="Acidic residues" evidence="3">
    <location>
        <begin position="431"/>
        <end position="447"/>
    </location>
</feature>
<feature type="binding site" evidence="2">
    <location>
        <position position="11"/>
    </location>
    <ligand>
        <name>GTP</name>
        <dbReference type="ChEBI" id="CHEBI:37565"/>
    </ligand>
</feature>
<feature type="binding site" evidence="1">
    <location>
        <position position="71"/>
    </location>
    <ligand>
        <name>GTP</name>
        <dbReference type="ChEBI" id="CHEBI:37565"/>
    </ligand>
</feature>
<feature type="binding site" evidence="1">
    <location>
        <position position="71"/>
    </location>
    <ligand>
        <name>Mg(2+)</name>
        <dbReference type="ChEBI" id="CHEBI:18420"/>
    </ligand>
</feature>
<feature type="binding site" evidence="2">
    <location>
        <position position="140"/>
    </location>
    <ligand>
        <name>GTP</name>
        <dbReference type="ChEBI" id="CHEBI:37565"/>
    </ligand>
</feature>
<feature type="binding site" evidence="2">
    <location>
        <position position="144"/>
    </location>
    <ligand>
        <name>GTP</name>
        <dbReference type="ChEBI" id="CHEBI:37565"/>
    </ligand>
</feature>
<feature type="binding site" evidence="2">
    <location>
        <position position="145"/>
    </location>
    <ligand>
        <name>GTP</name>
        <dbReference type="ChEBI" id="CHEBI:37565"/>
    </ligand>
</feature>
<feature type="binding site" evidence="2">
    <location>
        <position position="146"/>
    </location>
    <ligand>
        <name>GTP</name>
        <dbReference type="ChEBI" id="CHEBI:37565"/>
    </ligand>
</feature>
<feature type="binding site" evidence="2">
    <location>
        <position position="206"/>
    </location>
    <ligand>
        <name>GTP</name>
        <dbReference type="ChEBI" id="CHEBI:37565"/>
    </ligand>
</feature>
<feature type="binding site" evidence="2">
    <location>
        <position position="228"/>
    </location>
    <ligand>
        <name>GTP</name>
        <dbReference type="ChEBI" id="CHEBI:37565"/>
    </ligand>
</feature>
<feature type="sequence conflict" description="In Ref. 2; AAA19707." evidence="4" ref="2">
    <original>S</original>
    <variation>A</variation>
    <location>
        <position position="304"/>
    </location>
</feature>
<gene>
    <name type="primary">TUBB4</name>
    <name type="synonym">TUB4</name>
</gene>
<protein>
    <recommendedName>
        <fullName>Tubulin beta-4 chain</fullName>
    </recommendedName>
    <alternativeName>
        <fullName>Beta-4-tubulin</fullName>
    </alternativeName>
</protein>
<accession>Q41782</accession>
<accession>Q43696</accession>
<sequence length="447" mass="50132">MREILHIQGGQCGNQIGAKFWEVICGEHCVDSTGRYSGTSSQQLELERINVYYNEAGGGRYVPRAVLMDLEPGTMESIRAGPFGGIFRPDNFVYGQSGAGNNWAKGHYTEGAELIDSVLDVVRKEAENCDCLQGFQVCHSLGGGTGSGMGTLLISKIREEYPDRMMLTFSVFPSPKVSDTVVEPYNATLSVHQLVENADECMVLDNEALYDICFRTLKLTNPSFGDLNHLISATMSGVTCCLRFPGQLNSDLRKLAVNLIPFPRLHFFMVGFAPLTSRGSQQYRALTVPELTQQMWDAKNMMCSADPRHGRYLTASAMFRGKMSTKEVDEQMINVQNKNSSYFVEWIPNNVKSSVCDIPPVGLPMASTFVGNSTSIQEMFRRVSEQFTAMFRRKAFLHWYTSEGMDEMEFTEAESNMNDLVAEYQQYQDATAEEYEEEEHDGEEEHA</sequence>
<evidence type="ECO:0000250" key="1">
    <source>
        <dbReference type="UniProtKB" id="P68363"/>
    </source>
</evidence>
<evidence type="ECO:0000250" key="2">
    <source>
        <dbReference type="UniProtKB" id="Q13509"/>
    </source>
</evidence>
<evidence type="ECO:0000256" key="3">
    <source>
        <dbReference type="SAM" id="MobiDB-lite"/>
    </source>
</evidence>
<evidence type="ECO:0000305" key="4"/>
<reference key="1">
    <citation type="journal article" date="1993" name="Plant J.">
        <title>Four members of the maize beta-tubulin gene family are expressed in the male gametophyte.</title>
        <authorList>
            <person name="Rogers H.J."/>
            <person name="Greenland A.J."/>
            <person name="Hussey P.J."/>
        </authorList>
    </citation>
    <scope>NUCLEOTIDE SEQUENCE [MRNA]</scope>
    <source>
        <strain>cv. A188</strain>
        <tissue>Pollen</tissue>
    </source>
</reference>
<reference key="2">
    <citation type="journal article" date="1994" name="Plant Mol. Biol.">
        <title>Characterization of four new beta-tubulin genes and their expression during male flower development in maize (Zea mays L.).</title>
        <authorList>
            <person name="Villemur R."/>
            <person name="Haas N.A."/>
            <person name="Joyce C.M."/>
            <person name="Snustad D.P."/>
            <person name="Silflow C.D."/>
        </authorList>
    </citation>
    <scope>NUCLEOTIDE SEQUENCE [MRNA]</scope>
    <source>
        <strain>cv. B73</strain>
        <tissue>Seedling shoot</tissue>
    </source>
</reference>
<proteinExistence type="evidence at transcript level"/>
<dbReference type="EMBL" id="X74655">
    <property type="protein sequence ID" value="CAA52719.1"/>
    <property type="molecule type" value="mRNA"/>
</dbReference>
<dbReference type="EMBL" id="L10635">
    <property type="protein sequence ID" value="AAA19707.1"/>
    <property type="molecule type" value="mRNA"/>
</dbReference>
<dbReference type="PIR" id="S43326">
    <property type="entry name" value="S43326"/>
</dbReference>
<dbReference type="RefSeq" id="NP_001105457.1">
    <property type="nucleotide sequence ID" value="NM_001111987.1"/>
</dbReference>
<dbReference type="RefSeq" id="NP_001167653.1">
    <property type="nucleotide sequence ID" value="NM_001174182.1"/>
</dbReference>
<dbReference type="SMR" id="Q41782"/>
<dbReference type="FunCoup" id="Q41782">
    <property type="interactions" value="1857"/>
</dbReference>
<dbReference type="STRING" id="4577.Q41782"/>
<dbReference type="PaxDb" id="4577-GRMZM2G066191_P03"/>
<dbReference type="GeneID" id="542417"/>
<dbReference type="KEGG" id="zma:542417"/>
<dbReference type="eggNOG" id="KOG1375">
    <property type="taxonomic scope" value="Eukaryota"/>
</dbReference>
<dbReference type="InParanoid" id="Q41782"/>
<dbReference type="OrthoDB" id="732292at2759"/>
<dbReference type="Proteomes" id="UP000007305">
    <property type="component" value="Unplaced"/>
</dbReference>
<dbReference type="ExpressionAtlas" id="Q41782">
    <property type="expression patterns" value="baseline and differential"/>
</dbReference>
<dbReference type="GO" id="GO:0005737">
    <property type="term" value="C:cytoplasm"/>
    <property type="evidence" value="ECO:0000318"/>
    <property type="project" value="GO_Central"/>
</dbReference>
<dbReference type="GO" id="GO:0005874">
    <property type="term" value="C:microtubule"/>
    <property type="evidence" value="ECO:0000318"/>
    <property type="project" value="GO_Central"/>
</dbReference>
<dbReference type="GO" id="GO:0005525">
    <property type="term" value="F:GTP binding"/>
    <property type="evidence" value="ECO:0000318"/>
    <property type="project" value="GO_Central"/>
</dbReference>
<dbReference type="GO" id="GO:0003924">
    <property type="term" value="F:GTPase activity"/>
    <property type="evidence" value="ECO:0007669"/>
    <property type="project" value="InterPro"/>
</dbReference>
<dbReference type="GO" id="GO:0046872">
    <property type="term" value="F:metal ion binding"/>
    <property type="evidence" value="ECO:0007669"/>
    <property type="project" value="UniProtKB-KW"/>
</dbReference>
<dbReference type="GO" id="GO:0005200">
    <property type="term" value="F:structural constituent of cytoskeleton"/>
    <property type="evidence" value="ECO:0000318"/>
    <property type="project" value="GO_Central"/>
</dbReference>
<dbReference type="GO" id="GO:0000226">
    <property type="term" value="P:microtubule cytoskeleton organization"/>
    <property type="evidence" value="ECO:0000318"/>
    <property type="project" value="GO_Central"/>
</dbReference>
<dbReference type="GO" id="GO:0000278">
    <property type="term" value="P:mitotic cell cycle"/>
    <property type="evidence" value="ECO:0000318"/>
    <property type="project" value="GO_Central"/>
</dbReference>
<dbReference type="CDD" id="cd02187">
    <property type="entry name" value="beta_tubulin"/>
    <property type="match status" value="1"/>
</dbReference>
<dbReference type="FunFam" id="1.10.287.600:FF:000002">
    <property type="entry name" value="Tubulin beta chain"/>
    <property type="match status" value="1"/>
</dbReference>
<dbReference type="FunFam" id="3.30.1330.20:FF:000002">
    <property type="entry name" value="Tubulin beta chain"/>
    <property type="match status" value="1"/>
</dbReference>
<dbReference type="FunFam" id="3.40.50.1440:FF:000005">
    <property type="entry name" value="Tubulin beta chain"/>
    <property type="match status" value="1"/>
</dbReference>
<dbReference type="Gene3D" id="1.10.287.600">
    <property type="entry name" value="Helix hairpin bin"/>
    <property type="match status" value="1"/>
</dbReference>
<dbReference type="Gene3D" id="3.30.1330.20">
    <property type="entry name" value="Tubulin/FtsZ, C-terminal domain"/>
    <property type="match status" value="1"/>
</dbReference>
<dbReference type="Gene3D" id="3.40.50.1440">
    <property type="entry name" value="Tubulin/FtsZ, GTPase domain"/>
    <property type="match status" value="1"/>
</dbReference>
<dbReference type="InterPro" id="IPR013838">
    <property type="entry name" value="Beta-tubulin_BS"/>
</dbReference>
<dbReference type="InterPro" id="IPR002453">
    <property type="entry name" value="Beta_tubulin"/>
</dbReference>
<dbReference type="InterPro" id="IPR008280">
    <property type="entry name" value="Tub_FtsZ_C"/>
</dbReference>
<dbReference type="InterPro" id="IPR000217">
    <property type="entry name" value="Tubulin"/>
</dbReference>
<dbReference type="InterPro" id="IPR037103">
    <property type="entry name" value="Tubulin/FtsZ-like_C"/>
</dbReference>
<dbReference type="InterPro" id="IPR018316">
    <property type="entry name" value="Tubulin/FtsZ_2-layer-sand-dom"/>
</dbReference>
<dbReference type="InterPro" id="IPR036525">
    <property type="entry name" value="Tubulin/FtsZ_GTPase_sf"/>
</dbReference>
<dbReference type="InterPro" id="IPR023123">
    <property type="entry name" value="Tubulin_C"/>
</dbReference>
<dbReference type="InterPro" id="IPR017975">
    <property type="entry name" value="Tubulin_CS"/>
</dbReference>
<dbReference type="InterPro" id="IPR003008">
    <property type="entry name" value="Tubulin_FtsZ_GTPase"/>
</dbReference>
<dbReference type="PANTHER" id="PTHR11588">
    <property type="entry name" value="TUBULIN"/>
    <property type="match status" value="1"/>
</dbReference>
<dbReference type="Pfam" id="PF00091">
    <property type="entry name" value="Tubulin"/>
    <property type="match status" value="1"/>
</dbReference>
<dbReference type="Pfam" id="PF03953">
    <property type="entry name" value="Tubulin_C"/>
    <property type="match status" value="1"/>
</dbReference>
<dbReference type="PRINTS" id="PR01163">
    <property type="entry name" value="BETATUBULIN"/>
</dbReference>
<dbReference type="PRINTS" id="PR01161">
    <property type="entry name" value="TUBULIN"/>
</dbReference>
<dbReference type="SMART" id="SM00864">
    <property type="entry name" value="Tubulin"/>
    <property type="match status" value="1"/>
</dbReference>
<dbReference type="SMART" id="SM00865">
    <property type="entry name" value="Tubulin_C"/>
    <property type="match status" value="1"/>
</dbReference>
<dbReference type="SUPFAM" id="SSF55307">
    <property type="entry name" value="Tubulin C-terminal domain-like"/>
    <property type="match status" value="1"/>
</dbReference>
<dbReference type="SUPFAM" id="SSF52490">
    <property type="entry name" value="Tubulin nucleotide-binding domain-like"/>
    <property type="match status" value="1"/>
</dbReference>
<dbReference type="PROSITE" id="PS00227">
    <property type="entry name" value="TUBULIN"/>
    <property type="match status" value="1"/>
</dbReference>
<dbReference type="PROSITE" id="PS00228">
    <property type="entry name" value="TUBULIN_B_AUTOREG"/>
    <property type="match status" value="1"/>
</dbReference>
<keyword id="KW-0963">Cytoplasm</keyword>
<keyword id="KW-0206">Cytoskeleton</keyword>
<keyword id="KW-0342">GTP-binding</keyword>
<keyword id="KW-0460">Magnesium</keyword>
<keyword id="KW-0479">Metal-binding</keyword>
<keyword id="KW-0493">Microtubule</keyword>
<keyword id="KW-0547">Nucleotide-binding</keyword>
<keyword id="KW-1185">Reference proteome</keyword>
<organism>
    <name type="scientific">Zea mays</name>
    <name type="common">Maize</name>
    <dbReference type="NCBI Taxonomy" id="4577"/>
    <lineage>
        <taxon>Eukaryota</taxon>
        <taxon>Viridiplantae</taxon>
        <taxon>Streptophyta</taxon>
        <taxon>Embryophyta</taxon>
        <taxon>Tracheophyta</taxon>
        <taxon>Spermatophyta</taxon>
        <taxon>Magnoliopsida</taxon>
        <taxon>Liliopsida</taxon>
        <taxon>Poales</taxon>
        <taxon>Poaceae</taxon>
        <taxon>PACMAD clade</taxon>
        <taxon>Panicoideae</taxon>
        <taxon>Andropogonodae</taxon>
        <taxon>Andropogoneae</taxon>
        <taxon>Tripsacinae</taxon>
        <taxon>Zea</taxon>
    </lineage>
</organism>